<name>RHCG_GASAC</name>
<reference key="1">
    <citation type="submission" date="2006-05" db="EMBL/GenBank/DDBJ databases">
        <title>Identification of RhCG homolog in fish (three spined stickleback).</title>
        <authorList>
            <person name="Chen Y."/>
            <person name="Huang C.-H."/>
        </authorList>
    </citation>
    <scope>NUCLEOTIDE SEQUENCE [MRNA]</scope>
</reference>
<evidence type="ECO:0000250" key="1"/>
<evidence type="ECO:0000255" key="2"/>
<evidence type="ECO:0000305" key="3"/>
<proteinExistence type="evidence at transcript level"/>
<protein>
    <recommendedName>
        <fullName>Ammonium transporter Rh type C</fullName>
    </recommendedName>
    <alternativeName>
        <fullName>Rhesus blood group family type C glycoprotein</fullName>
        <shortName>Rh family type C glycoprotein</shortName>
        <shortName>Rh type C glycoprotein</shortName>
    </alternativeName>
</protein>
<gene>
    <name type="primary">rhcg</name>
</gene>
<feature type="chain" id="PRO_0000283589" description="Ammonium transporter Rh type C">
    <location>
        <begin position="1"/>
        <end position="489"/>
    </location>
</feature>
<feature type="topological domain" description="Cytoplasmic" evidence="2">
    <location>
        <begin position="1"/>
        <end position="21"/>
    </location>
</feature>
<feature type="transmembrane region" description="Helical" evidence="2">
    <location>
        <begin position="22"/>
        <end position="42"/>
    </location>
</feature>
<feature type="topological domain" description="Extracellular" evidence="2">
    <location>
        <begin position="43"/>
        <end position="75"/>
    </location>
</feature>
<feature type="transmembrane region" description="Helical" evidence="2">
    <location>
        <begin position="76"/>
        <end position="96"/>
    </location>
</feature>
<feature type="topological domain" description="Cytoplasmic" evidence="2">
    <location>
        <begin position="97"/>
        <end position="100"/>
    </location>
</feature>
<feature type="transmembrane region" description="Helical" evidence="2">
    <location>
        <begin position="101"/>
        <end position="121"/>
    </location>
</feature>
<feature type="topological domain" description="Extracellular" evidence="2">
    <location>
        <begin position="122"/>
        <end position="140"/>
    </location>
</feature>
<feature type="transmembrane region" description="Helical" evidence="2">
    <location>
        <begin position="141"/>
        <end position="161"/>
    </location>
</feature>
<feature type="topological domain" description="Cytoplasmic" evidence="2">
    <location>
        <begin position="162"/>
        <end position="169"/>
    </location>
</feature>
<feature type="transmembrane region" description="Helical" evidence="2">
    <location>
        <begin position="170"/>
        <end position="190"/>
    </location>
</feature>
<feature type="topological domain" description="Extracellular" evidence="2">
    <location>
        <begin position="191"/>
        <end position="195"/>
    </location>
</feature>
<feature type="transmembrane region" description="Helical" evidence="2">
    <location>
        <begin position="196"/>
        <end position="216"/>
    </location>
</feature>
<feature type="topological domain" description="Cytoplasmic" evidence="2">
    <location>
        <begin position="217"/>
        <end position="235"/>
    </location>
</feature>
<feature type="transmembrane region" description="Helical" evidence="2">
    <location>
        <begin position="236"/>
        <end position="256"/>
    </location>
</feature>
<feature type="topological domain" description="Extracellular" evidence="2">
    <location>
        <begin position="257"/>
        <end position="266"/>
    </location>
</feature>
<feature type="transmembrane region" description="Helical" evidence="2">
    <location>
        <begin position="267"/>
        <end position="287"/>
    </location>
</feature>
<feature type="topological domain" description="Cytoplasmic" evidence="2">
    <location>
        <begin position="288"/>
        <end position="298"/>
    </location>
</feature>
<feature type="transmembrane region" description="Helical" evidence="2">
    <location>
        <begin position="299"/>
        <end position="319"/>
    </location>
</feature>
<feature type="topological domain" description="Extracellular" evidence="2">
    <location>
        <position position="320"/>
    </location>
</feature>
<feature type="transmembrane region" description="Helical" evidence="2">
    <location>
        <begin position="321"/>
        <end position="341"/>
    </location>
</feature>
<feature type="topological domain" description="Cytoplasmic" evidence="2">
    <location>
        <begin position="342"/>
        <end position="359"/>
    </location>
</feature>
<feature type="transmembrane region" description="Helical" evidence="2">
    <location>
        <begin position="360"/>
        <end position="380"/>
    </location>
</feature>
<feature type="topological domain" description="Extracellular" evidence="2">
    <location>
        <begin position="381"/>
        <end position="412"/>
    </location>
</feature>
<feature type="transmembrane region" description="Helical" evidence="2">
    <location>
        <begin position="413"/>
        <end position="433"/>
    </location>
</feature>
<feature type="topological domain" description="Cytoplasmic" evidence="2">
    <location>
        <begin position="434"/>
        <end position="489"/>
    </location>
</feature>
<feature type="glycosylation site" description="N-linked (GlcNAc...) asparagine" evidence="2">
    <location>
        <position position="62"/>
    </location>
</feature>
<keyword id="KW-0924">Ammonia transport</keyword>
<keyword id="KW-1003">Cell membrane</keyword>
<keyword id="KW-0325">Glycoprotein</keyword>
<keyword id="KW-0472">Membrane</keyword>
<keyword id="KW-0812">Transmembrane</keyword>
<keyword id="KW-1133">Transmembrane helix</keyword>
<keyword id="KW-0813">Transport</keyword>
<accession>Q19KH7</accession>
<dbReference type="EMBL" id="DQ523518">
    <property type="protein sequence ID" value="ABF69690.1"/>
    <property type="molecule type" value="mRNA"/>
</dbReference>
<dbReference type="RefSeq" id="NP_001254575.1">
    <property type="nucleotide sequence ID" value="NM_001267646.1"/>
</dbReference>
<dbReference type="SMR" id="Q19KH7"/>
<dbReference type="STRING" id="69293.ENSGACP00000021022"/>
<dbReference type="GlyCosmos" id="Q19KH7">
    <property type="glycosylation" value="1 site, No reported glycans"/>
</dbReference>
<dbReference type="GeneID" id="100174887"/>
<dbReference type="KEGG" id="gat:100174887"/>
<dbReference type="CTD" id="100038797"/>
<dbReference type="eggNOG" id="KOG3796">
    <property type="taxonomic scope" value="Eukaryota"/>
</dbReference>
<dbReference type="InParanoid" id="Q19KH7"/>
<dbReference type="OrthoDB" id="1641903at2759"/>
<dbReference type="GO" id="GO:0016324">
    <property type="term" value="C:apical plasma membrane"/>
    <property type="evidence" value="ECO:0007669"/>
    <property type="project" value="UniProtKB-SubCell"/>
</dbReference>
<dbReference type="GO" id="GO:0008519">
    <property type="term" value="F:ammonium channel activity"/>
    <property type="evidence" value="ECO:0007669"/>
    <property type="project" value="InterPro"/>
</dbReference>
<dbReference type="GO" id="GO:0097272">
    <property type="term" value="P:ammonium homeostasis"/>
    <property type="evidence" value="ECO:0007669"/>
    <property type="project" value="TreeGrafter"/>
</dbReference>
<dbReference type="FunFam" id="1.10.3430.10:FF:000001">
    <property type="entry name" value="Ammonium transporter Rh type C"/>
    <property type="match status" value="1"/>
</dbReference>
<dbReference type="Gene3D" id="1.10.3430.10">
    <property type="entry name" value="Ammonium transporter AmtB like domains"/>
    <property type="match status" value="1"/>
</dbReference>
<dbReference type="InterPro" id="IPR029020">
    <property type="entry name" value="Ammonium/urea_transptr"/>
</dbReference>
<dbReference type="InterPro" id="IPR024041">
    <property type="entry name" value="NH4_transpt_AmtB-like_dom"/>
</dbReference>
<dbReference type="InterPro" id="IPR002229">
    <property type="entry name" value="RhesusRHD"/>
</dbReference>
<dbReference type="PANTHER" id="PTHR11730">
    <property type="entry name" value="AMMONIUM TRANSPORTER"/>
    <property type="match status" value="1"/>
</dbReference>
<dbReference type="PANTHER" id="PTHR11730:SF30">
    <property type="entry name" value="AMMONIUM TRANSPORTER RH TYPE C"/>
    <property type="match status" value="1"/>
</dbReference>
<dbReference type="Pfam" id="PF00909">
    <property type="entry name" value="Ammonium_transp"/>
    <property type="match status" value="1"/>
</dbReference>
<dbReference type="PRINTS" id="PR00342">
    <property type="entry name" value="RHESUSRHD"/>
</dbReference>
<dbReference type="SUPFAM" id="SSF111352">
    <property type="entry name" value="Ammonium transporter"/>
    <property type="match status" value="1"/>
</dbReference>
<comment type="function">
    <text evidence="1">Functions as an ammonia transporter. May play a role in the elimination of ammonia in the gill (By similarity).</text>
</comment>
<comment type="subunit">
    <text>Homotrimer.</text>
</comment>
<comment type="subcellular location">
    <subcellularLocation>
        <location evidence="1">Apical cell membrane</location>
        <topology evidence="1">Multi-pass membrane protein</topology>
    </subcellularLocation>
</comment>
<comment type="similarity">
    <text evidence="3">Belongs to the ammonium transporter (TC 2.A.49) family. Rh subfamily.</text>
</comment>
<organism>
    <name type="scientific">Gasterosteus aculeatus</name>
    <name type="common">Three-spined stickleback</name>
    <dbReference type="NCBI Taxonomy" id="69293"/>
    <lineage>
        <taxon>Eukaryota</taxon>
        <taxon>Metazoa</taxon>
        <taxon>Chordata</taxon>
        <taxon>Craniata</taxon>
        <taxon>Vertebrata</taxon>
        <taxon>Euteleostomi</taxon>
        <taxon>Actinopterygii</taxon>
        <taxon>Neopterygii</taxon>
        <taxon>Teleostei</taxon>
        <taxon>Neoteleostei</taxon>
        <taxon>Acanthomorphata</taxon>
        <taxon>Eupercaria</taxon>
        <taxon>Perciformes</taxon>
        <taxon>Cottioidei</taxon>
        <taxon>Gasterosteales</taxon>
        <taxon>Gasterosteidae</taxon>
        <taxon>Gasterosteus</taxon>
    </lineage>
</organism>
<sequence>MGNCADCLRGFFCPPKNTNIRISLPAVCFVWQIAMIVLFGVFIRYDAESDIRLWLQLKHTNNITSDIENDFYFRYPSFQDVHVMIFVGFGFLMTFLKRYSFGGVGFNFLIGAFGLQWALLMQGWFHALDPTTGKISIGVEGLINADFCVAASLIAYGALLGKVSPVQLMVVTLFGVTLFAVEEYIILNLLHCRDAGGSMVIHCFGGYYGLTISWILYRPKLHQSKRLNGSVYHSDVFAMIGTLFLWMFWPSFNSAITDHGSGQHRTAINTYIALASSVLTTVAISSASEKRGKLDMVHIQNATLAGGVAMGTAAEFMITPYGALIVGFCTGIISTFGYLFVSPFMEKYLKIQDTCGVHNLHAMPGMLGGFIGAIVAAAATEEVYSREGLIETFDFEGKFADRTVGTQGGFQAAGVCVAIAFAVVGGAVVGLILRLPIWGDPADDNCFDDEVYWEVPEDEEGILPVLEYNNHMTHKHQDISESNFSVEQS</sequence>